<evidence type="ECO:0000255" key="1">
    <source>
        <dbReference type="HAMAP-Rule" id="MF_00046"/>
    </source>
</evidence>
<accession>B2SYX4</accession>
<feature type="chain" id="PRO_1000091086" description="UDP-N-acetylmuramate--L-alanine ligase">
    <location>
        <begin position="1"/>
        <end position="467"/>
    </location>
</feature>
<feature type="binding site" evidence="1">
    <location>
        <begin position="112"/>
        <end position="118"/>
    </location>
    <ligand>
        <name>ATP</name>
        <dbReference type="ChEBI" id="CHEBI:30616"/>
    </ligand>
</feature>
<organism>
    <name type="scientific">Paraburkholderia phytofirmans (strain DSM 17436 / LMG 22146 / PsJN)</name>
    <name type="common">Burkholderia phytofirmans</name>
    <dbReference type="NCBI Taxonomy" id="398527"/>
    <lineage>
        <taxon>Bacteria</taxon>
        <taxon>Pseudomonadati</taxon>
        <taxon>Pseudomonadota</taxon>
        <taxon>Betaproteobacteria</taxon>
        <taxon>Burkholderiales</taxon>
        <taxon>Burkholderiaceae</taxon>
        <taxon>Paraburkholderia</taxon>
    </lineage>
</organism>
<dbReference type="EC" id="6.3.2.8" evidence="1"/>
<dbReference type="EMBL" id="CP001052">
    <property type="protein sequence ID" value="ACD17859.1"/>
    <property type="molecule type" value="Genomic_DNA"/>
</dbReference>
<dbReference type="RefSeq" id="WP_012434420.1">
    <property type="nucleotide sequence ID" value="NC_010681.1"/>
</dbReference>
<dbReference type="SMR" id="B2SYX4"/>
<dbReference type="STRING" id="398527.Bphyt_3469"/>
<dbReference type="GeneID" id="97303665"/>
<dbReference type="KEGG" id="bpy:Bphyt_3469"/>
<dbReference type="eggNOG" id="COG0773">
    <property type="taxonomic scope" value="Bacteria"/>
</dbReference>
<dbReference type="HOGENOM" id="CLU_028104_2_2_4"/>
<dbReference type="OrthoDB" id="9804126at2"/>
<dbReference type="UniPathway" id="UPA00219"/>
<dbReference type="Proteomes" id="UP000001739">
    <property type="component" value="Chromosome 1"/>
</dbReference>
<dbReference type="GO" id="GO:0005737">
    <property type="term" value="C:cytoplasm"/>
    <property type="evidence" value="ECO:0007669"/>
    <property type="project" value="UniProtKB-SubCell"/>
</dbReference>
<dbReference type="GO" id="GO:0005524">
    <property type="term" value="F:ATP binding"/>
    <property type="evidence" value="ECO:0007669"/>
    <property type="project" value="UniProtKB-UniRule"/>
</dbReference>
<dbReference type="GO" id="GO:0008763">
    <property type="term" value="F:UDP-N-acetylmuramate-L-alanine ligase activity"/>
    <property type="evidence" value="ECO:0007669"/>
    <property type="project" value="UniProtKB-UniRule"/>
</dbReference>
<dbReference type="GO" id="GO:0051301">
    <property type="term" value="P:cell division"/>
    <property type="evidence" value="ECO:0007669"/>
    <property type="project" value="UniProtKB-KW"/>
</dbReference>
<dbReference type="GO" id="GO:0071555">
    <property type="term" value="P:cell wall organization"/>
    <property type="evidence" value="ECO:0007669"/>
    <property type="project" value="UniProtKB-KW"/>
</dbReference>
<dbReference type="GO" id="GO:0009252">
    <property type="term" value="P:peptidoglycan biosynthetic process"/>
    <property type="evidence" value="ECO:0007669"/>
    <property type="project" value="UniProtKB-UniRule"/>
</dbReference>
<dbReference type="GO" id="GO:0008360">
    <property type="term" value="P:regulation of cell shape"/>
    <property type="evidence" value="ECO:0007669"/>
    <property type="project" value="UniProtKB-KW"/>
</dbReference>
<dbReference type="FunFam" id="3.40.1190.10:FF:000001">
    <property type="entry name" value="UDP-N-acetylmuramate--L-alanine ligase"/>
    <property type="match status" value="1"/>
</dbReference>
<dbReference type="Gene3D" id="3.90.190.20">
    <property type="entry name" value="Mur ligase, C-terminal domain"/>
    <property type="match status" value="1"/>
</dbReference>
<dbReference type="Gene3D" id="3.40.1190.10">
    <property type="entry name" value="Mur-like, catalytic domain"/>
    <property type="match status" value="1"/>
</dbReference>
<dbReference type="Gene3D" id="3.40.50.720">
    <property type="entry name" value="NAD(P)-binding Rossmann-like Domain"/>
    <property type="match status" value="1"/>
</dbReference>
<dbReference type="HAMAP" id="MF_00046">
    <property type="entry name" value="MurC"/>
    <property type="match status" value="1"/>
</dbReference>
<dbReference type="InterPro" id="IPR036565">
    <property type="entry name" value="Mur-like_cat_sf"/>
</dbReference>
<dbReference type="InterPro" id="IPR004101">
    <property type="entry name" value="Mur_ligase_C"/>
</dbReference>
<dbReference type="InterPro" id="IPR036615">
    <property type="entry name" value="Mur_ligase_C_dom_sf"/>
</dbReference>
<dbReference type="InterPro" id="IPR013221">
    <property type="entry name" value="Mur_ligase_cen"/>
</dbReference>
<dbReference type="InterPro" id="IPR000713">
    <property type="entry name" value="Mur_ligase_N"/>
</dbReference>
<dbReference type="InterPro" id="IPR050061">
    <property type="entry name" value="MurCDEF_pg_biosynth"/>
</dbReference>
<dbReference type="InterPro" id="IPR005758">
    <property type="entry name" value="UDP-N-AcMur_Ala_ligase_MurC"/>
</dbReference>
<dbReference type="NCBIfam" id="TIGR01082">
    <property type="entry name" value="murC"/>
    <property type="match status" value="1"/>
</dbReference>
<dbReference type="PANTHER" id="PTHR43445:SF3">
    <property type="entry name" value="UDP-N-ACETYLMURAMATE--L-ALANINE LIGASE"/>
    <property type="match status" value="1"/>
</dbReference>
<dbReference type="PANTHER" id="PTHR43445">
    <property type="entry name" value="UDP-N-ACETYLMURAMATE--L-ALANINE LIGASE-RELATED"/>
    <property type="match status" value="1"/>
</dbReference>
<dbReference type="Pfam" id="PF01225">
    <property type="entry name" value="Mur_ligase"/>
    <property type="match status" value="1"/>
</dbReference>
<dbReference type="Pfam" id="PF02875">
    <property type="entry name" value="Mur_ligase_C"/>
    <property type="match status" value="1"/>
</dbReference>
<dbReference type="Pfam" id="PF08245">
    <property type="entry name" value="Mur_ligase_M"/>
    <property type="match status" value="1"/>
</dbReference>
<dbReference type="SUPFAM" id="SSF51984">
    <property type="entry name" value="MurCD N-terminal domain"/>
    <property type="match status" value="1"/>
</dbReference>
<dbReference type="SUPFAM" id="SSF53623">
    <property type="entry name" value="MurD-like peptide ligases, catalytic domain"/>
    <property type="match status" value="1"/>
</dbReference>
<dbReference type="SUPFAM" id="SSF53244">
    <property type="entry name" value="MurD-like peptide ligases, peptide-binding domain"/>
    <property type="match status" value="1"/>
</dbReference>
<name>MURC_PARPJ</name>
<reference key="1">
    <citation type="journal article" date="2011" name="J. Bacteriol.">
        <title>Complete genome sequence of the plant growth-promoting endophyte Burkholderia phytofirmans strain PsJN.</title>
        <authorList>
            <person name="Weilharter A."/>
            <person name="Mitter B."/>
            <person name="Shin M.V."/>
            <person name="Chain P.S."/>
            <person name="Nowak J."/>
            <person name="Sessitsch A."/>
        </authorList>
    </citation>
    <scope>NUCLEOTIDE SEQUENCE [LARGE SCALE GENOMIC DNA]</scope>
    <source>
        <strain>DSM 17436 / LMG 22146 / PsJN</strain>
    </source>
</reference>
<gene>
    <name evidence="1" type="primary">murC</name>
    <name type="ordered locus">Bphyt_3469</name>
</gene>
<comment type="function">
    <text evidence="1">Cell wall formation.</text>
</comment>
<comment type="catalytic activity">
    <reaction evidence="1">
        <text>UDP-N-acetyl-alpha-D-muramate + L-alanine + ATP = UDP-N-acetyl-alpha-D-muramoyl-L-alanine + ADP + phosphate + H(+)</text>
        <dbReference type="Rhea" id="RHEA:23372"/>
        <dbReference type="ChEBI" id="CHEBI:15378"/>
        <dbReference type="ChEBI" id="CHEBI:30616"/>
        <dbReference type="ChEBI" id="CHEBI:43474"/>
        <dbReference type="ChEBI" id="CHEBI:57972"/>
        <dbReference type="ChEBI" id="CHEBI:70757"/>
        <dbReference type="ChEBI" id="CHEBI:83898"/>
        <dbReference type="ChEBI" id="CHEBI:456216"/>
        <dbReference type="EC" id="6.3.2.8"/>
    </reaction>
</comment>
<comment type="pathway">
    <text evidence="1">Cell wall biogenesis; peptidoglycan biosynthesis.</text>
</comment>
<comment type="subcellular location">
    <subcellularLocation>
        <location evidence="1">Cytoplasm</location>
    </subcellularLocation>
</comment>
<comment type="similarity">
    <text evidence="1">Belongs to the MurCDEF family.</text>
</comment>
<sequence>MKHIVKHIHFVGIGGVGMSGIAEVLVNLGYQVSGSDLTSNAITDRLAALGARIAIGHAAENIEGANAVVVSTAVRSDNPEVLAARHRRIPIVPRAVMLAELMRLKQGIAIAGTHGKTTTTSLVASVLAAGGLDPTFVIGGRLISAGANARLGTGDFIVAEADESDASFLNLFPVIEVITNIDADHMDTYGHDFARLKQAFIEFTHRLPFYGIAVLCVDDPNVKEILPFVSKPIIRYGFAPDAQVRAVNVKAHDGKMHFTAMREDAAPIDIVLNLPGEHNVQNALAAIAIATELEVKDADIQRALADFNGVGRRFQRYGEVPVVSEGKASGAYTLVDDYGHHPVEMAATVAAARGAFPGRRLVLAFQPHRFTRTRDCFEDFVKVLSTVDALVLTEVYSAGESPIVAADGRALARALRVAGKVEPVFVDTVDEVPDALSAVVRDGDVVITMGAGSIGGVPGRLAQETKV</sequence>
<proteinExistence type="inferred from homology"/>
<keyword id="KW-0067">ATP-binding</keyword>
<keyword id="KW-0131">Cell cycle</keyword>
<keyword id="KW-0132">Cell division</keyword>
<keyword id="KW-0133">Cell shape</keyword>
<keyword id="KW-0961">Cell wall biogenesis/degradation</keyword>
<keyword id="KW-0963">Cytoplasm</keyword>
<keyword id="KW-0436">Ligase</keyword>
<keyword id="KW-0547">Nucleotide-binding</keyword>
<keyword id="KW-0573">Peptidoglycan synthesis</keyword>
<protein>
    <recommendedName>
        <fullName evidence="1">UDP-N-acetylmuramate--L-alanine ligase</fullName>
        <ecNumber evidence="1">6.3.2.8</ecNumber>
    </recommendedName>
    <alternativeName>
        <fullName evidence="1">UDP-N-acetylmuramoyl-L-alanine synthetase</fullName>
    </alternativeName>
</protein>